<protein>
    <recommendedName>
        <fullName evidence="1">Ubiquinone biosynthesis protein COQ4, mitochondrial</fullName>
    </recommendedName>
    <alternativeName>
        <fullName>4-hydroxy-3-methoxy-5-polyprenylbenzoate decarboxylase</fullName>
        <ecNumber evidence="1">4.1.1.130</ecNumber>
    </alternativeName>
    <alternativeName>
        <fullName evidence="1">Coenzyme Q biosynthesis protein 4</fullName>
    </alternativeName>
</protein>
<gene>
    <name evidence="1" type="primary">COQ4</name>
    <name type="ordered locus">YDR204W</name>
    <name type="ORF">YD8142.01</name>
</gene>
<reference key="1">
    <citation type="journal article" date="1997" name="Nature">
        <title>The nucleotide sequence of Saccharomyces cerevisiae chromosome IV.</title>
        <authorList>
            <person name="Jacq C."/>
            <person name="Alt-Moerbe J."/>
            <person name="Andre B."/>
            <person name="Arnold W."/>
            <person name="Bahr A."/>
            <person name="Ballesta J.P.G."/>
            <person name="Bargues M."/>
            <person name="Baron L."/>
            <person name="Becker A."/>
            <person name="Biteau N."/>
            <person name="Bloecker H."/>
            <person name="Blugeon C."/>
            <person name="Boskovic J."/>
            <person name="Brandt P."/>
            <person name="Brueckner M."/>
            <person name="Buitrago M.J."/>
            <person name="Coster F."/>
            <person name="Delaveau T."/>
            <person name="del Rey F."/>
            <person name="Dujon B."/>
            <person name="Eide L.G."/>
            <person name="Garcia-Cantalejo J.M."/>
            <person name="Goffeau A."/>
            <person name="Gomez-Peris A."/>
            <person name="Granotier C."/>
            <person name="Hanemann V."/>
            <person name="Hankeln T."/>
            <person name="Hoheisel J.D."/>
            <person name="Jaeger W."/>
            <person name="Jimenez A."/>
            <person name="Jonniaux J.-L."/>
            <person name="Kraemer C."/>
            <person name="Kuester H."/>
            <person name="Laamanen P."/>
            <person name="Legros Y."/>
            <person name="Louis E.J."/>
            <person name="Moeller-Rieker S."/>
            <person name="Monnet A."/>
            <person name="Moro M."/>
            <person name="Mueller-Auer S."/>
            <person name="Nussbaumer B."/>
            <person name="Paricio N."/>
            <person name="Paulin L."/>
            <person name="Perea J."/>
            <person name="Perez-Alonso M."/>
            <person name="Perez-Ortin J.E."/>
            <person name="Pohl T.M."/>
            <person name="Prydz H."/>
            <person name="Purnelle B."/>
            <person name="Rasmussen S.W."/>
            <person name="Remacha M.A."/>
            <person name="Revuelta J.L."/>
            <person name="Rieger M."/>
            <person name="Salom D."/>
            <person name="Saluz H.P."/>
            <person name="Saiz J.E."/>
            <person name="Saren A.-M."/>
            <person name="Schaefer M."/>
            <person name="Scharfe M."/>
            <person name="Schmidt E.R."/>
            <person name="Schneider C."/>
            <person name="Scholler P."/>
            <person name="Schwarz S."/>
            <person name="Soler-Mira A."/>
            <person name="Urrestarazu L.A."/>
            <person name="Verhasselt P."/>
            <person name="Vissers S."/>
            <person name="Voet M."/>
            <person name="Volckaert G."/>
            <person name="Wagner G."/>
            <person name="Wambutt R."/>
            <person name="Wedler E."/>
            <person name="Wedler H."/>
            <person name="Woelfl S."/>
            <person name="Harris D.E."/>
            <person name="Bowman S."/>
            <person name="Brown D."/>
            <person name="Churcher C.M."/>
            <person name="Connor R."/>
            <person name="Dedman K."/>
            <person name="Gentles S."/>
            <person name="Hamlin N."/>
            <person name="Hunt S."/>
            <person name="Jones L."/>
            <person name="McDonald S."/>
            <person name="Murphy L.D."/>
            <person name="Niblett D."/>
            <person name="Odell C."/>
            <person name="Oliver K."/>
            <person name="Rajandream M.A."/>
            <person name="Richards C."/>
            <person name="Shore L."/>
            <person name="Walsh S.V."/>
            <person name="Barrell B.G."/>
            <person name="Dietrich F.S."/>
            <person name="Mulligan J.T."/>
            <person name="Allen E."/>
            <person name="Araujo R."/>
            <person name="Aviles E."/>
            <person name="Berno A."/>
            <person name="Carpenter J."/>
            <person name="Chen E."/>
            <person name="Cherry J.M."/>
            <person name="Chung E."/>
            <person name="Duncan M."/>
            <person name="Hunicke-Smith S."/>
            <person name="Hyman R.W."/>
            <person name="Komp C."/>
            <person name="Lashkari D."/>
            <person name="Lew H."/>
            <person name="Lin D."/>
            <person name="Mosedale D."/>
            <person name="Nakahara K."/>
            <person name="Namath A."/>
            <person name="Oefner P."/>
            <person name="Oh C."/>
            <person name="Petel F.X."/>
            <person name="Roberts D."/>
            <person name="Schramm S."/>
            <person name="Schroeder M."/>
            <person name="Shogren T."/>
            <person name="Shroff N."/>
            <person name="Winant A."/>
            <person name="Yelton M.A."/>
            <person name="Botstein D."/>
            <person name="Davis R.W."/>
            <person name="Johnston M."/>
            <person name="Andrews S."/>
            <person name="Brinkman R."/>
            <person name="Cooper J."/>
            <person name="Ding H."/>
            <person name="Du Z."/>
            <person name="Favello A."/>
            <person name="Fulton L."/>
            <person name="Gattung S."/>
            <person name="Greco T."/>
            <person name="Hallsworth K."/>
            <person name="Hawkins J."/>
            <person name="Hillier L.W."/>
            <person name="Jier M."/>
            <person name="Johnson D."/>
            <person name="Johnston L."/>
            <person name="Kirsten J."/>
            <person name="Kucaba T."/>
            <person name="Langston Y."/>
            <person name="Latreille P."/>
            <person name="Le T."/>
            <person name="Mardis E."/>
            <person name="Menezes S."/>
            <person name="Miller N."/>
            <person name="Nhan M."/>
            <person name="Pauley A."/>
            <person name="Peluso D."/>
            <person name="Rifkin L."/>
            <person name="Riles L."/>
            <person name="Taich A."/>
            <person name="Trevaskis E."/>
            <person name="Vignati D."/>
            <person name="Wilcox L."/>
            <person name="Wohldman P."/>
            <person name="Vaudin M."/>
            <person name="Wilson R."/>
            <person name="Waterston R."/>
            <person name="Albermann K."/>
            <person name="Hani J."/>
            <person name="Heumann K."/>
            <person name="Kleine K."/>
            <person name="Mewes H.-W."/>
            <person name="Zollner A."/>
            <person name="Zaccaria P."/>
        </authorList>
    </citation>
    <scope>NUCLEOTIDE SEQUENCE [LARGE SCALE GENOMIC DNA]</scope>
    <source>
        <strain>ATCC 204508 / S288c</strain>
    </source>
</reference>
<reference key="2">
    <citation type="journal article" date="2014" name="G3 (Bethesda)">
        <title>The reference genome sequence of Saccharomyces cerevisiae: Then and now.</title>
        <authorList>
            <person name="Engel S.R."/>
            <person name="Dietrich F.S."/>
            <person name="Fisk D.G."/>
            <person name="Binkley G."/>
            <person name="Balakrishnan R."/>
            <person name="Costanzo M.C."/>
            <person name="Dwight S.S."/>
            <person name="Hitz B.C."/>
            <person name="Karra K."/>
            <person name="Nash R.S."/>
            <person name="Weng S."/>
            <person name="Wong E.D."/>
            <person name="Lloyd P."/>
            <person name="Skrzypek M.S."/>
            <person name="Miyasato S.R."/>
            <person name="Simison M."/>
            <person name="Cherry J.M."/>
        </authorList>
    </citation>
    <scope>GENOME REANNOTATION</scope>
    <source>
        <strain>ATCC 204508 / S288c</strain>
    </source>
</reference>
<reference key="3">
    <citation type="journal article" date="2001" name="Arch. Biochem. Biophys.">
        <title>Yeast COQ4 encodes a mitochondrial protein required for coenzyme Q synthesis.</title>
        <authorList>
            <person name="Belogrudov G.I."/>
            <person name="Lee P.T."/>
            <person name="Jonassen T."/>
            <person name="Hsu A.Y."/>
            <person name="Gin P."/>
            <person name="Clarke C.F."/>
        </authorList>
    </citation>
    <scope>CHARACTERIZATION</scope>
    <scope>MUTAGENESIS OF GLU-226</scope>
    <scope>SUBCELLULAR LOCATION</scope>
</reference>
<reference key="4">
    <citation type="journal article" date="2003" name="Nature">
        <title>Global analysis of protein localization in budding yeast.</title>
        <authorList>
            <person name="Huh W.-K."/>
            <person name="Falvo J.V."/>
            <person name="Gerke L.C."/>
            <person name="Carroll A.S."/>
            <person name="Howson R.W."/>
            <person name="Weissman J.S."/>
            <person name="O'Shea E.K."/>
        </authorList>
    </citation>
    <scope>SUBCELLULAR LOCATION [LARGE SCALE ANALYSIS]</scope>
</reference>
<reference key="5">
    <citation type="journal article" date="2005" name="J. Biol. Chem.">
        <title>Genetic evidence for a multi-subunit complex in coenzyme Q biosynthesis in yeast and the role of the Coq1 hexaprenyl diphosphate synthase.</title>
        <authorList>
            <person name="Gin P."/>
            <person name="Clarke C.F."/>
        </authorList>
    </citation>
    <scope>FUNCTION</scope>
    <scope>PATHWAY</scope>
</reference>
<reference key="6">
    <citation type="journal article" date="2005" name="J. Biol. Chem.">
        <title>Coq3 and Coq4 define a polypeptide complex in yeast mitochondria for the biosynthesis of coenzyme Q.</title>
        <authorList>
            <person name="Marbois B.N."/>
            <person name="Gin P."/>
            <person name="Faull K.F."/>
            <person name="Poon W.W."/>
            <person name="Lee P.T."/>
            <person name="Strahan J."/>
            <person name="Shepherd J.N."/>
            <person name="Clarke C.F."/>
        </authorList>
    </citation>
    <scope>INTERACTION WITH COQ3</scope>
</reference>
<reference key="7">
    <citation type="journal article" date="2006" name="J. Biol. Chem.">
        <title>Complementation of Saccharomyces cerevisiae coq7 mutants by mitochondrial targeting of the Escherichia coli UbiF polypeptide: two functions of yeast Coq7 polypeptide in coenzyme Q biosynthesis.</title>
        <authorList>
            <person name="Tran U.C."/>
            <person name="Marbois B.N."/>
            <person name="Gin P."/>
            <person name="Gulmezian M."/>
            <person name="Jonassen T."/>
            <person name="Clarke C.F."/>
        </authorList>
    </citation>
    <scope>SUBUNIT</scope>
</reference>
<reference key="8">
    <citation type="journal article" date="2007" name="Arch. Biochem. Biophys.">
        <title>Saccharomyces cerevisiae Coq9 polypeptide is a subunit of the mitochondrial coenzyme Q biosynthetic complex.</title>
        <authorList>
            <person name="Hsieh E.J."/>
            <person name="Gin P."/>
            <person name="Gulmezian M."/>
            <person name="Tran U.C."/>
            <person name="Saiki R."/>
            <person name="Marbois B.N."/>
            <person name="Clarke C.F."/>
        </authorList>
    </citation>
    <scope>FUNCTION</scope>
    <scope>PATHWAY</scope>
    <scope>IDENTIFICATION IN COQ ENZYME COMPLEX</scope>
    <scope>INTERACTION WITH COQ9</scope>
</reference>
<reference key="9">
    <citation type="journal article" date="2009" name="Biochim. Biophys. Acta">
        <title>The yeast Coq4 polypeptide organizes a mitochondrial protein complex essential for coenzyme Q biosynthesis.</title>
        <authorList>
            <person name="Marbois B.N."/>
            <person name="Gin P."/>
            <person name="Gulmezian M."/>
            <person name="Clarke C.F."/>
        </authorList>
    </citation>
    <scope>FUNCTION</scope>
    <scope>PATHWAY</scope>
    <scope>MUTAGENESIS OF GLY-120; GLU-121 AND GLU-226</scope>
</reference>
<organism>
    <name type="scientific">Saccharomyces cerevisiae (strain ATCC 204508 / S288c)</name>
    <name type="common">Baker's yeast</name>
    <dbReference type="NCBI Taxonomy" id="559292"/>
    <lineage>
        <taxon>Eukaryota</taxon>
        <taxon>Fungi</taxon>
        <taxon>Dikarya</taxon>
        <taxon>Ascomycota</taxon>
        <taxon>Saccharomycotina</taxon>
        <taxon>Saccharomycetes</taxon>
        <taxon>Saccharomycetales</taxon>
        <taxon>Saccharomycetaceae</taxon>
        <taxon>Saccharomyces</taxon>
    </lineage>
</organism>
<accession>O13525</accession>
<accession>D6VSI5</accession>
<accession>Q03454</accession>
<sequence length="335" mass="38627">MLRLSLLRSTATLPVKCQRRGLILPAAAMYTLGSLIFGKEARLADAMERGELHNKNVDYAKEAEERTELRIRALANTRPMEPRYNGHVPLHRYEKLLLFAISGWNSFFHPEDGYNIVQLGEATALPVFLENLKQTMLSDSSGRRILKEQPNITTEILHMDKLAKLPHNTFGYVYYQWLKRENVSPDTRAPVKFIDDPMHAYIFKRYRQCHDFYHAITNMPIIIEGEITIKALEGANLGVPMAILGGILAPLRLKKVQRKRLYNIYLPWAVRTGLSCKPLINVYWEEMLEKDVTALRKELKITLPPDLRTMRKERAALRKEIDAKYNSQKRATTPA</sequence>
<keyword id="KW-0456">Lyase</keyword>
<keyword id="KW-0472">Membrane</keyword>
<keyword id="KW-0479">Metal-binding</keyword>
<keyword id="KW-0496">Mitochondrion</keyword>
<keyword id="KW-0999">Mitochondrion inner membrane</keyword>
<keyword id="KW-1185">Reference proteome</keyword>
<keyword id="KW-0809">Transit peptide</keyword>
<keyword id="KW-0831">Ubiquinone biosynthesis</keyword>
<keyword id="KW-0862">Zinc</keyword>
<dbReference type="EC" id="4.1.1.130" evidence="1"/>
<dbReference type="EMBL" id="Z68194">
    <property type="protein sequence ID" value="CAA92343.1"/>
    <property type="molecule type" value="Genomic_DNA"/>
</dbReference>
<dbReference type="EMBL" id="BK006938">
    <property type="protein sequence ID" value="DAA12045.1"/>
    <property type="molecule type" value="Genomic_DNA"/>
</dbReference>
<dbReference type="PIR" id="S61567">
    <property type="entry name" value="S61567"/>
</dbReference>
<dbReference type="RefSeq" id="NP_010490.1">
    <property type="nucleotide sequence ID" value="NM_001180512.1"/>
</dbReference>
<dbReference type="SMR" id="O13525"/>
<dbReference type="BioGRID" id="32254">
    <property type="interactions" value="126"/>
</dbReference>
<dbReference type="ComplexPortal" id="CPX-1155">
    <property type="entry name" value="CoQ biosynthetic complex"/>
</dbReference>
<dbReference type="FunCoup" id="O13525">
    <property type="interactions" value="621"/>
</dbReference>
<dbReference type="IntAct" id="O13525">
    <property type="interactions" value="23"/>
</dbReference>
<dbReference type="STRING" id="4932.YDR204W"/>
<dbReference type="PaxDb" id="4932-YDR204W"/>
<dbReference type="PeptideAtlas" id="O13525"/>
<dbReference type="DNASU" id="851785"/>
<dbReference type="EnsemblFungi" id="YDR204W_mRNA">
    <property type="protein sequence ID" value="YDR204W"/>
    <property type="gene ID" value="YDR204W"/>
</dbReference>
<dbReference type="GeneID" id="851785"/>
<dbReference type="KEGG" id="sce:YDR204W"/>
<dbReference type="AGR" id="SGD:S000002612"/>
<dbReference type="SGD" id="S000002612">
    <property type="gene designation" value="COQ4"/>
</dbReference>
<dbReference type="VEuPathDB" id="FungiDB:YDR204W"/>
<dbReference type="eggNOG" id="KOG3244">
    <property type="taxonomic scope" value="Eukaryota"/>
</dbReference>
<dbReference type="GeneTree" id="ENSGT00390000003828"/>
<dbReference type="HOGENOM" id="CLU_061241_0_2_1"/>
<dbReference type="InParanoid" id="O13525"/>
<dbReference type="OMA" id="YYERHFH"/>
<dbReference type="OrthoDB" id="4249at2759"/>
<dbReference type="BioCyc" id="YEAST:G3O-29788-MONOMER"/>
<dbReference type="Reactome" id="R-SCE-2142789">
    <property type="pathway name" value="Ubiquinol biosynthesis"/>
</dbReference>
<dbReference type="UniPathway" id="UPA00232"/>
<dbReference type="BioGRID-ORCS" id="851785">
    <property type="hits" value="5 hits in 10 CRISPR screens"/>
</dbReference>
<dbReference type="PRO" id="PR:O13525"/>
<dbReference type="Proteomes" id="UP000002311">
    <property type="component" value="Chromosome IV"/>
</dbReference>
<dbReference type="RNAct" id="O13525">
    <property type="molecule type" value="protein"/>
</dbReference>
<dbReference type="GO" id="GO:0031314">
    <property type="term" value="C:extrinsic component of mitochondrial inner membrane"/>
    <property type="evidence" value="ECO:0000314"/>
    <property type="project" value="WormBase"/>
</dbReference>
<dbReference type="GO" id="GO:0005743">
    <property type="term" value="C:mitochondrial inner membrane"/>
    <property type="evidence" value="ECO:0000314"/>
    <property type="project" value="UniProtKB"/>
</dbReference>
<dbReference type="GO" id="GO:0005739">
    <property type="term" value="C:mitochondrion"/>
    <property type="evidence" value="ECO:0007005"/>
    <property type="project" value="SGD"/>
</dbReference>
<dbReference type="GO" id="GO:0006744">
    <property type="term" value="P:ubiquinone biosynthetic process"/>
    <property type="evidence" value="ECO:0000315"/>
    <property type="project" value="UniProtKB"/>
</dbReference>
<dbReference type="HAMAP" id="MF_03111">
    <property type="entry name" value="Coq4"/>
    <property type="match status" value="1"/>
</dbReference>
<dbReference type="InterPro" id="IPR007715">
    <property type="entry name" value="Coq4"/>
</dbReference>
<dbReference type="InterPro" id="IPR027540">
    <property type="entry name" value="Coq4_euk"/>
</dbReference>
<dbReference type="PANTHER" id="PTHR12922">
    <property type="entry name" value="UBIQUINONE BIOSYNTHESIS PROTEIN"/>
    <property type="match status" value="1"/>
</dbReference>
<dbReference type="PANTHER" id="PTHR12922:SF7">
    <property type="entry name" value="UBIQUINONE BIOSYNTHESIS PROTEIN COQ4 HOMOLOG, MITOCHONDRIAL"/>
    <property type="match status" value="1"/>
</dbReference>
<dbReference type="Pfam" id="PF05019">
    <property type="entry name" value="Coq4"/>
    <property type="match status" value="1"/>
</dbReference>
<feature type="transit peptide" description="Mitochondrion" evidence="1">
    <location>
        <begin position="1"/>
        <end position="10"/>
    </location>
</feature>
<feature type="chain" id="PRO_0000006035" description="Ubiquinone biosynthesis protein COQ4, mitochondrial">
    <location>
        <begin position="11"/>
        <end position="335"/>
    </location>
</feature>
<feature type="binding site" evidence="1">
    <location>
        <position position="210"/>
    </location>
    <ligand>
        <name>Zn(2+)</name>
        <dbReference type="ChEBI" id="CHEBI:29105"/>
    </ligand>
</feature>
<feature type="binding site" evidence="1">
    <location>
        <position position="211"/>
    </location>
    <ligand>
        <name>Zn(2+)</name>
        <dbReference type="ChEBI" id="CHEBI:29105"/>
    </ligand>
</feature>
<feature type="binding site" evidence="1">
    <location>
        <position position="214"/>
    </location>
    <ligand>
        <name>Zn(2+)</name>
        <dbReference type="ChEBI" id="CHEBI:29105"/>
    </ligand>
</feature>
<feature type="binding site" evidence="1">
    <location>
        <position position="226"/>
    </location>
    <ligand>
        <name>Zn(2+)</name>
        <dbReference type="ChEBI" id="CHEBI:29105"/>
    </ligand>
</feature>
<feature type="mutagenesis site" description="In COQ4-3; abolishes coenzyme Q biosynthesis, but does not affect stability of other COQ polypeptides." evidence="8">
    <original>G</original>
    <variation>E</variation>
    <location>
        <position position="120"/>
    </location>
</feature>
<feature type="mutagenesis site" description="In COQ4-2; abolishes coenzyme Q biosynthesis, but does not affect stability of other COQ polypeptides." evidence="8">
    <original>E</original>
    <variation>K</variation>
    <location>
        <position position="121"/>
    </location>
</feature>
<feature type="mutagenesis site" description="In COQ4-1; abolishes coenzyme Q biosynthesis, but does not affect stability of other COQ polypeptides." evidence="2 8">
    <original>E</original>
    <variation>K</variation>
    <location>
        <position position="226"/>
    </location>
</feature>
<evidence type="ECO:0000255" key="1">
    <source>
        <dbReference type="HAMAP-Rule" id="MF_03111"/>
    </source>
</evidence>
<evidence type="ECO:0000269" key="2">
    <source>
    </source>
</evidence>
<evidence type="ECO:0000269" key="3">
    <source>
    </source>
</evidence>
<evidence type="ECO:0000269" key="4">
    <source>
    </source>
</evidence>
<evidence type="ECO:0000269" key="5">
    <source>
    </source>
</evidence>
<evidence type="ECO:0000269" key="6">
    <source>
    </source>
</evidence>
<evidence type="ECO:0000269" key="7">
    <source>
    </source>
</evidence>
<evidence type="ECO:0000269" key="8">
    <source>
    </source>
</evidence>
<name>COQ4_YEAST</name>
<proteinExistence type="evidence at protein level"/>
<comment type="function">
    <text evidence="1 4 7 8">Lyase that catalyzes the C1-decarboxylation of 4-hydroxy-3-methoxy-5-(all-trans-hexaprenyl)benzoic acid into 2-methoxy-6-(all-trans-hexaprenyl)phenol during ubiquinone biosynthesis (By similarity). May play a role in organizing a multi-subunit COQ enzyme complex required for coenzyme Q biosynthesis (PubMed:15548532, PubMed:17391640, PubMed:19022396). Required for steady-state levels of COQ3, COQ4, COQ6, COQ7 and COQ9 polypeptides (PubMed:15548532, PubMed:17391640, PubMed:19022396).</text>
</comment>
<comment type="catalytic activity">
    <reaction evidence="1">
        <text>4-hydroxy-3-methoxy-5-(all-trans-hexaprenyl)benzoate + H(+) = 2-methoxy-6-(all-trans-hexaprenyl)phenol + CO2</text>
        <dbReference type="Rhea" id="RHEA:44768"/>
        <dbReference type="ChEBI" id="CHEBI:1109"/>
        <dbReference type="ChEBI" id="CHEBI:15378"/>
        <dbReference type="ChEBI" id="CHEBI:16526"/>
        <dbReference type="ChEBI" id="CHEBI:57916"/>
        <dbReference type="EC" id="4.1.1.130"/>
    </reaction>
</comment>
<comment type="cofactor">
    <cofactor evidence="1">
        <name>Zn(2+)</name>
        <dbReference type="ChEBI" id="CHEBI:29105"/>
    </cofactor>
</comment>
<comment type="pathway">
    <text evidence="1 4 7 8">Cofactor biosynthesis; ubiquinone biosynthesis.</text>
</comment>
<comment type="subunit">
    <text evidence="1 5 6 7">Component of a multi-subunit COQ enzyme complex, composed of at least COQ3, COQ4, COQ5, COQ6, COQ7 and COQ9. Interacts with COQ3.</text>
</comment>
<comment type="subcellular location">
    <subcellularLocation>
        <location evidence="1 2 3">Mitochondrion inner membrane</location>
        <topology evidence="1 2 3">Peripheral membrane protein</topology>
        <orientation evidence="1 2 3">Matrix side</orientation>
    </subcellularLocation>
</comment>
<comment type="similarity">
    <text evidence="1">Belongs to the COQ4 family.</text>
</comment>